<reference key="1">
    <citation type="journal article" date="1995" name="Science">
        <title>Whole-genome random sequencing and assembly of Haemophilus influenzae Rd.</title>
        <authorList>
            <person name="Fleischmann R.D."/>
            <person name="Adams M.D."/>
            <person name="White O."/>
            <person name="Clayton R.A."/>
            <person name="Kirkness E.F."/>
            <person name="Kerlavage A.R."/>
            <person name="Bult C.J."/>
            <person name="Tomb J.-F."/>
            <person name="Dougherty B.A."/>
            <person name="Merrick J.M."/>
            <person name="McKenney K."/>
            <person name="Sutton G.G."/>
            <person name="FitzHugh W."/>
            <person name="Fields C.A."/>
            <person name="Gocayne J.D."/>
            <person name="Scott J.D."/>
            <person name="Shirley R."/>
            <person name="Liu L.-I."/>
            <person name="Glodek A."/>
            <person name="Kelley J.M."/>
            <person name="Weidman J.F."/>
            <person name="Phillips C.A."/>
            <person name="Spriggs T."/>
            <person name="Hedblom E."/>
            <person name="Cotton M.D."/>
            <person name="Utterback T.R."/>
            <person name="Hanna M.C."/>
            <person name="Nguyen D.T."/>
            <person name="Saudek D.M."/>
            <person name="Brandon R.C."/>
            <person name="Fine L.D."/>
            <person name="Fritchman J.L."/>
            <person name="Fuhrmann J.L."/>
            <person name="Geoghagen N.S.M."/>
            <person name="Gnehm C.L."/>
            <person name="McDonald L.A."/>
            <person name="Small K.V."/>
            <person name="Fraser C.M."/>
            <person name="Smith H.O."/>
            <person name="Venter J.C."/>
        </authorList>
    </citation>
    <scope>NUCLEOTIDE SEQUENCE [LARGE SCALE GENOMIC DNA]</scope>
    <source>
        <strain>ATCC 51907 / DSM 11121 / KW20 / Rd</strain>
    </source>
</reference>
<proteinExistence type="inferred from homology"/>
<sequence>MSGVFHLNLTKAQLKGATLAIVPGDPARSERIAKQLDNPEFLTSTREFTSWLGYINGQPIVVCSTGIGGPSTSICVEELAQLGVRTFLRIGTTGAIQPHINVGDVLITTAAVRLDGASHHFVPLEYPAVANFECTTALYNAAKAKGIEPYVGVTVSSDTFYPGQERYDTYSGKVYRNYQGLLKQWQDLNVMNYEMESSTLFTMCSALGLRAGMVAGVIVNRTQQEIPNEATIKQTEEKAVSVVITAAQALLS</sequence>
<comment type="function">
    <text evidence="1">Catalyzes the reversible phosphorylytic cleavage of uridine to uracil and ribose-1-phosphate.</text>
</comment>
<comment type="catalytic activity">
    <reaction evidence="1">
        <text>uridine + phosphate = alpha-D-ribose 1-phosphate + uracil</text>
        <dbReference type="Rhea" id="RHEA:24388"/>
        <dbReference type="ChEBI" id="CHEBI:16704"/>
        <dbReference type="ChEBI" id="CHEBI:17568"/>
        <dbReference type="ChEBI" id="CHEBI:43474"/>
        <dbReference type="ChEBI" id="CHEBI:57720"/>
        <dbReference type="EC" id="2.4.2.3"/>
    </reaction>
</comment>
<comment type="pathway">
    <text>Pyrimidine metabolism; UMP biosynthesis via salvage pathway; uracil from uridine (phosphorylase route): step 1/1.</text>
</comment>
<comment type="subunit">
    <text evidence="1">Homohexamer.</text>
</comment>
<comment type="subcellular location">
    <subcellularLocation>
        <location evidence="1">Cytoplasm</location>
    </subcellularLocation>
</comment>
<comment type="similarity">
    <text evidence="2">Belongs to the PNP/UDP phosphorylase family.</text>
</comment>
<comment type="sequence caution" evidence="2">
    <conflict type="erroneous initiation">
        <sequence resource="EMBL-CDS" id="AAC21943"/>
    </conflict>
</comment>
<evidence type="ECO:0000250" key="1">
    <source>
        <dbReference type="UniProtKB" id="P12758"/>
    </source>
</evidence>
<evidence type="ECO:0000305" key="2"/>
<organism>
    <name type="scientific">Haemophilus influenzae (strain ATCC 51907 / DSM 11121 / KW20 / Rd)</name>
    <dbReference type="NCBI Taxonomy" id="71421"/>
    <lineage>
        <taxon>Bacteria</taxon>
        <taxon>Pseudomonadati</taxon>
        <taxon>Pseudomonadota</taxon>
        <taxon>Gammaproteobacteria</taxon>
        <taxon>Pasteurellales</taxon>
        <taxon>Pasteurellaceae</taxon>
        <taxon>Haemophilus</taxon>
    </lineage>
</organism>
<feature type="chain" id="PRO_0000063186" description="Uridine phosphorylase">
    <location>
        <begin position="1"/>
        <end position="252"/>
    </location>
</feature>
<name>UDP_HAEIN</name>
<accession>P43770</accession>
<dbReference type="EC" id="2.4.2.3" evidence="1"/>
<dbReference type="EMBL" id="L42023">
    <property type="protein sequence ID" value="AAC21943.1"/>
    <property type="status" value="ALT_INIT"/>
    <property type="molecule type" value="Genomic_DNA"/>
</dbReference>
<dbReference type="PIR" id="C64059">
    <property type="entry name" value="C64059"/>
</dbReference>
<dbReference type="RefSeq" id="NP_438448.2">
    <property type="nucleotide sequence ID" value="NC_000907.1"/>
</dbReference>
<dbReference type="SMR" id="P43770"/>
<dbReference type="STRING" id="71421.HI_0280"/>
<dbReference type="EnsemblBacteria" id="AAC21943">
    <property type="protein sequence ID" value="AAC21943"/>
    <property type="gene ID" value="HI_0280"/>
</dbReference>
<dbReference type="KEGG" id="hin:HI_0280"/>
<dbReference type="PATRIC" id="fig|71421.8.peg.296"/>
<dbReference type="eggNOG" id="COG2820">
    <property type="taxonomic scope" value="Bacteria"/>
</dbReference>
<dbReference type="HOGENOM" id="CLU_068457_0_0_6"/>
<dbReference type="OrthoDB" id="5296640at2"/>
<dbReference type="PhylomeDB" id="P43770"/>
<dbReference type="BioCyc" id="HINF71421:G1GJ1-299-MONOMER"/>
<dbReference type="UniPathway" id="UPA00574">
    <property type="reaction ID" value="UER00633"/>
</dbReference>
<dbReference type="Proteomes" id="UP000000579">
    <property type="component" value="Chromosome"/>
</dbReference>
<dbReference type="GO" id="GO:0005829">
    <property type="term" value="C:cytosol"/>
    <property type="evidence" value="ECO:0000318"/>
    <property type="project" value="GO_Central"/>
</dbReference>
<dbReference type="GO" id="GO:0004850">
    <property type="term" value="F:uridine phosphorylase activity"/>
    <property type="evidence" value="ECO:0007669"/>
    <property type="project" value="UniProtKB-EC"/>
</dbReference>
<dbReference type="GO" id="GO:0009164">
    <property type="term" value="P:nucleoside catabolic process"/>
    <property type="evidence" value="ECO:0007669"/>
    <property type="project" value="UniProtKB-ARBA"/>
</dbReference>
<dbReference type="GO" id="GO:0009166">
    <property type="term" value="P:nucleotide catabolic process"/>
    <property type="evidence" value="ECO:0007669"/>
    <property type="project" value="InterPro"/>
</dbReference>
<dbReference type="GO" id="GO:0044206">
    <property type="term" value="P:UMP salvage"/>
    <property type="evidence" value="ECO:0007669"/>
    <property type="project" value="UniProtKB-UniPathway"/>
</dbReference>
<dbReference type="CDD" id="cd17767">
    <property type="entry name" value="UP_EcUdp-like"/>
    <property type="match status" value="1"/>
</dbReference>
<dbReference type="Gene3D" id="3.40.50.1580">
    <property type="entry name" value="Nucleoside phosphorylase domain"/>
    <property type="match status" value="1"/>
</dbReference>
<dbReference type="InterPro" id="IPR018016">
    <property type="entry name" value="Nucleoside_phosphorylase_CS"/>
</dbReference>
<dbReference type="InterPro" id="IPR000845">
    <property type="entry name" value="Nucleoside_phosphorylase_d"/>
</dbReference>
<dbReference type="InterPro" id="IPR035994">
    <property type="entry name" value="Nucleoside_phosphorylase_sf"/>
</dbReference>
<dbReference type="InterPro" id="IPR010058">
    <property type="entry name" value="Uridine_phosphorylase"/>
</dbReference>
<dbReference type="NCBIfam" id="NF008383">
    <property type="entry name" value="PRK11178.1"/>
    <property type="match status" value="1"/>
</dbReference>
<dbReference type="NCBIfam" id="TIGR01718">
    <property type="entry name" value="Uridine-psphlse"/>
    <property type="match status" value="1"/>
</dbReference>
<dbReference type="PANTHER" id="PTHR43691:SF11">
    <property type="entry name" value="FI09636P-RELATED"/>
    <property type="match status" value="1"/>
</dbReference>
<dbReference type="PANTHER" id="PTHR43691">
    <property type="entry name" value="URIDINE PHOSPHORYLASE"/>
    <property type="match status" value="1"/>
</dbReference>
<dbReference type="Pfam" id="PF01048">
    <property type="entry name" value="PNP_UDP_1"/>
    <property type="match status" value="1"/>
</dbReference>
<dbReference type="SUPFAM" id="SSF53167">
    <property type="entry name" value="Purine and uridine phosphorylases"/>
    <property type="match status" value="1"/>
</dbReference>
<dbReference type="PROSITE" id="PS01232">
    <property type="entry name" value="PNP_UDP_1"/>
    <property type="match status" value="1"/>
</dbReference>
<keyword id="KW-0963">Cytoplasm</keyword>
<keyword id="KW-0328">Glycosyltransferase</keyword>
<keyword id="KW-1185">Reference proteome</keyword>
<keyword id="KW-0808">Transferase</keyword>
<gene>
    <name type="primary">udp</name>
    <name type="ordered locus">HI_0280</name>
</gene>
<protein>
    <recommendedName>
        <fullName evidence="1">Uridine phosphorylase</fullName>
        <shortName evidence="1">UPase</shortName>
        <shortName evidence="1">UrdPase</shortName>
        <ecNumber evidence="1">2.4.2.3</ecNumber>
    </recommendedName>
</protein>